<name>MDA3_ARATH</name>
<reference key="1">
    <citation type="journal article" date="1999" name="DNA Res.">
        <title>Structural analysis of Arabidopsis thaliana chromosome 5. IX. Sequence features of the regions of 1,011,550 bp covered by seventeen P1 and TAC clones.</title>
        <authorList>
            <person name="Kaneko T."/>
            <person name="Katoh T."/>
            <person name="Sato S."/>
            <person name="Nakamura Y."/>
            <person name="Asamizu E."/>
            <person name="Kotani H."/>
            <person name="Miyajima N."/>
            <person name="Tabata S."/>
        </authorList>
    </citation>
    <scope>NUCLEOTIDE SEQUENCE [LARGE SCALE GENOMIC DNA]</scope>
    <source>
        <strain>cv. Columbia</strain>
    </source>
</reference>
<reference key="2">
    <citation type="journal article" date="2017" name="Plant J.">
        <title>Araport11: a complete reannotation of the Arabidopsis thaliana reference genome.</title>
        <authorList>
            <person name="Cheng C.Y."/>
            <person name="Krishnakumar V."/>
            <person name="Chan A.P."/>
            <person name="Thibaud-Nissen F."/>
            <person name="Schobel S."/>
            <person name="Town C.D."/>
        </authorList>
    </citation>
    <scope>GENOME REANNOTATION</scope>
    <source>
        <strain>cv. Columbia</strain>
    </source>
</reference>
<reference key="3">
    <citation type="journal article" date="2003" name="Science">
        <title>Empirical analysis of transcriptional activity in the Arabidopsis genome.</title>
        <authorList>
            <person name="Yamada K."/>
            <person name="Lim J."/>
            <person name="Dale J.M."/>
            <person name="Chen H."/>
            <person name="Shinn P."/>
            <person name="Palm C.J."/>
            <person name="Southwick A.M."/>
            <person name="Wu H.C."/>
            <person name="Kim C.J."/>
            <person name="Nguyen M."/>
            <person name="Pham P.K."/>
            <person name="Cheuk R.F."/>
            <person name="Karlin-Newmann G."/>
            <person name="Liu S.X."/>
            <person name="Lam B."/>
            <person name="Sakano H."/>
            <person name="Wu T."/>
            <person name="Yu G."/>
            <person name="Miranda M."/>
            <person name="Quach H.L."/>
            <person name="Tripp M."/>
            <person name="Chang C.H."/>
            <person name="Lee J.M."/>
            <person name="Toriumi M.J."/>
            <person name="Chan M.M."/>
            <person name="Tang C.C."/>
            <person name="Onodera C.S."/>
            <person name="Deng J.M."/>
            <person name="Akiyama K."/>
            <person name="Ansari Y."/>
            <person name="Arakawa T."/>
            <person name="Banh J."/>
            <person name="Banno F."/>
            <person name="Bowser L."/>
            <person name="Brooks S.Y."/>
            <person name="Carninci P."/>
            <person name="Chao Q."/>
            <person name="Choy N."/>
            <person name="Enju A."/>
            <person name="Goldsmith A.D."/>
            <person name="Gurjal M."/>
            <person name="Hansen N.F."/>
            <person name="Hayashizaki Y."/>
            <person name="Johnson-Hopson C."/>
            <person name="Hsuan V.W."/>
            <person name="Iida K."/>
            <person name="Karnes M."/>
            <person name="Khan S."/>
            <person name="Koesema E."/>
            <person name="Ishida J."/>
            <person name="Jiang P.X."/>
            <person name="Jones T."/>
            <person name="Kawai J."/>
            <person name="Kamiya A."/>
            <person name="Meyers C."/>
            <person name="Nakajima M."/>
            <person name="Narusaka M."/>
            <person name="Seki M."/>
            <person name="Sakurai T."/>
            <person name="Satou M."/>
            <person name="Tamse R."/>
            <person name="Vaysberg M."/>
            <person name="Wallender E.K."/>
            <person name="Wong C."/>
            <person name="Yamamura Y."/>
            <person name="Yuan S."/>
            <person name="Shinozaki K."/>
            <person name="Davis R.W."/>
            <person name="Theologis A."/>
            <person name="Ecker J.R."/>
        </authorList>
    </citation>
    <scope>NUCLEOTIDE SEQUENCE [LARGE SCALE MRNA]</scope>
    <source>
        <strain>cv. Columbia</strain>
    </source>
</reference>
<reference key="4">
    <citation type="journal article" date="2007" name="Mol. Cell">
        <title>Purification of a plant mediator from Arabidopsis thaliana identifies PFT1 as the Med25 subunit.</title>
        <authorList>
            <person name="Baeckstroem S."/>
            <person name="Elfving N."/>
            <person name="Nilsson R."/>
            <person name="Wingsle G."/>
            <person name="Bjoerklund S."/>
        </authorList>
    </citation>
    <scope>IDENTIFICATION BY MASS SPECTROMETRY</scope>
    <scope>SUBUNIT</scope>
</reference>
<accession>Q9FHX8</accession>
<feature type="chain" id="PRO_0000419195" description="Mediator-associated protein 3">
    <location>
        <begin position="1"/>
        <end position="92"/>
    </location>
</feature>
<feature type="domain" description="DEK-C" evidence="1">
    <location>
        <begin position="13"/>
        <end position="70"/>
    </location>
</feature>
<evidence type="ECO:0000255" key="1">
    <source>
        <dbReference type="PROSITE-ProRule" id="PRU01342"/>
    </source>
</evidence>
<evidence type="ECO:0000269" key="2">
    <source>
    </source>
</evidence>
<evidence type="ECO:0000305" key="3"/>
<dbReference type="EMBL" id="AB017067">
    <property type="protein sequence ID" value="BAB08439.1"/>
    <property type="molecule type" value="Genomic_DNA"/>
</dbReference>
<dbReference type="EMBL" id="CP002688">
    <property type="protein sequence ID" value="AED94761.1"/>
    <property type="molecule type" value="Genomic_DNA"/>
</dbReference>
<dbReference type="EMBL" id="AY072311">
    <property type="protein sequence ID" value="AAL61918.1"/>
    <property type="molecule type" value="mRNA"/>
</dbReference>
<dbReference type="EMBL" id="AY114547">
    <property type="protein sequence ID" value="AAM47866.1"/>
    <property type="molecule type" value="mRNA"/>
</dbReference>
<dbReference type="RefSeq" id="NP_199021.1">
    <property type="nucleotide sequence ID" value="NM_123571.3"/>
</dbReference>
<dbReference type="SMR" id="Q9FHX8"/>
<dbReference type="BioGRID" id="19461">
    <property type="interactions" value="1"/>
</dbReference>
<dbReference type="FunCoup" id="Q9FHX8">
    <property type="interactions" value="41"/>
</dbReference>
<dbReference type="IntAct" id="Q9FHX8">
    <property type="interactions" value="3"/>
</dbReference>
<dbReference type="STRING" id="3702.Q9FHX8"/>
<dbReference type="PaxDb" id="3702-AT5G42060.1"/>
<dbReference type="ProteomicsDB" id="238825"/>
<dbReference type="DNASU" id="834211"/>
<dbReference type="EnsemblPlants" id="AT5G42060.1">
    <property type="protein sequence ID" value="AT5G42060.1"/>
    <property type="gene ID" value="AT5G42060"/>
</dbReference>
<dbReference type="GeneID" id="834211"/>
<dbReference type="Gramene" id="AT5G42060.1">
    <property type="protein sequence ID" value="AT5G42060.1"/>
    <property type="gene ID" value="AT5G42060"/>
</dbReference>
<dbReference type="KEGG" id="ath:AT5G42060"/>
<dbReference type="Araport" id="AT5G42060"/>
<dbReference type="TAIR" id="AT5G42060"/>
<dbReference type="HOGENOM" id="CLU_2416307_0_0_1"/>
<dbReference type="InParanoid" id="Q9FHX8"/>
<dbReference type="OrthoDB" id="1107754at2759"/>
<dbReference type="PhylomeDB" id="Q9FHX8"/>
<dbReference type="PRO" id="PR:Q9FHX8"/>
<dbReference type="Proteomes" id="UP000006548">
    <property type="component" value="Chromosome 5"/>
</dbReference>
<dbReference type="ExpressionAtlas" id="Q9FHX8">
    <property type="expression patterns" value="baseline and differential"/>
</dbReference>
<dbReference type="GO" id="GO:0016592">
    <property type="term" value="C:mediator complex"/>
    <property type="evidence" value="ECO:0000314"/>
    <property type="project" value="UniProtKB"/>
</dbReference>
<dbReference type="InterPro" id="IPR014876">
    <property type="entry name" value="DEK_C"/>
</dbReference>
<dbReference type="Pfam" id="PF08766">
    <property type="entry name" value="DEK_C"/>
    <property type="match status" value="1"/>
</dbReference>
<dbReference type="PROSITE" id="PS51998">
    <property type="entry name" value="DEK_C"/>
    <property type="match status" value="1"/>
</dbReference>
<keyword id="KW-0539">Nucleus</keyword>
<keyword id="KW-1185">Reference proteome</keyword>
<protein>
    <recommendedName>
        <fullName>Mediator-associated protein 3</fullName>
    </recommendedName>
    <alternativeName>
        <fullName>DEK-domain containing protein At5g42060</fullName>
    </alternativeName>
    <alternativeName>
        <fullName>KELP-like protein</fullName>
    </alternativeName>
</protein>
<sequence>MEEVAREEVEIDKDLRRKIKKTVKKILESSNLYKITEIKAREEASLKLDLDLSQDPYKVIVKEEVENFLEEAVKLIGNKLAMLPKRIESTSI</sequence>
<organism>
    <name type="scientific">Arabidopsis thaliana</name>
    <name type="common">Mouse-ear cress</name>
    <dbReference type="NCBI Taxonomy" id="3702"/>
    <lineage>
        <taxon>Eukaryota</taxon>
        <taxon>Viridiplantae</taxon>
        <taxon>Streptophyta</taxon>
        <taxon>Embryophyta</taxon>
        <taxon>Tracheophyta</taxon>
        <taxon>Spermatophyta</taxon>
        <taxon>Magnoliopsida</taxon>
        <taxon>eudicotyledons</taxon>
        <taxon>Gunneridae</taxon>
        <taxon>Pentapetalae</taxon>
        <taxon>rosids</taxon>
        <taxon>malvids</taxon>
        <taxon>Brassicales</taxon>
        <taxon>Brassicaceae</taxon>
        <taxon>Camelineae</taxon>
        <taxon>Arabidopsis</taxon>
    </lineage>
</organism>
<gene>
    <name type="ordered locus">At5g42060</name>
    <name type="ORF">MJC20.17</name>
</gene>
<proteinExistence type="evidence at protein level"/>
<comment type="subunit">
    <text evidence="2">Associated with the Mediator complex.</text>
</comment>
<comment type="subcellular location">
    <subcellularLocation>
        <location evidence="3">Nucleus</location>
    </subcellularLocation>
</comment>